<gene>
    <name type="primary">hbb</name>
</gene>
<keyword id="KW-0226">DNA condensation</keyword>
<keyword id="KW-0238">DNA-binding</keyword>
<protein>
    <recommendedName>
        <fullName>DNA-binding protein HBbu</fullName>
    </recommendedName>
</protein>
<comment type="function">
    <text evidence="1">Histone-like DNA-binding protein which is capable of wrapping DNA to stabilize it, and thus to prevent its denaturation under extreme environmental conditions.</text>
</comment>
<comment type="similarity">
    <text evidence="2">Belongs to the bacterial histone-like protein family.</text>
</comment>
<dbReference type="EMBL" id="U48682">
    <property type="protein sequence ID" value="AAC73104.1"/>
    <property type="molecule type" value="Genomic_DNA"/>
</dbReference>
<dbReference type="SMR" id="Q45722"/>
<dbReference type="GO" id="GO:0005829">
    <property type="term" value="C:cytosol"/>
    <property type="evidence" value="ECO:0007669"/>
    <property type="project" value="TreeGrafter"/>
</dbReference>
<dbReference type="GO" id="GO:0003677">
    <property type="term" value="F:DNA binding"/>
    <property type="evidence" value="ECO:0007669"/>
    <property type="project" value="UniProtKB-KW"/>
</dbReference>
<dbReference type="GO" id="GO:0030527">
    <property type="term" value="F:structural constituent of chromatin"/>
    <property type="evidence" value="ECO:0007669"/>
    <property type="project" value="InterPro"/>
</dbReference>
<dbReference type="GO" id="GO:0030261">
    <property type="term" value="P:chromosome condensation"/>
    <property type="evidence" value="ECO:0007669"/>
    <property type="project" value="UniProtKB-KW"/>
</dbReference>
<dbReference type="CDD" id="cd13836">
    <property type="entry name" value="IHF_B"/>
    <property type="match status" value="1"/>
</dbReference>
<dbReference type="Gene3D" id="4.10.520.10">
    <property type="entry name" value="IHF-like DNA-binding proteins"/>
    <property type="match status" value="1"/>
</dbReference>
<dbReference type="InterPro" id="IPR000119">
    <property type="entry name" value="Hist_DNA-bd"/>
</dbReference>
<dbReference type="InterPro" id="IPR020816">
    <property type="entry name" value="Histone-like_DNA-bd_CS"/>
</dbReference>
<dbReference type="InterPro" id="IPR010992">
    <property type="entry name" value="IHF-like_DNA-bd_dom_sf"/>
</dbReference>
<dbReference type="PANTHER" id="PTHR33175">
    <property type="entry name" value="DNA-BINDING PROTEIN HU"/>
    <property type="match status" value="1"/>
</dbReference>
<dbReference type="PANTHER" id="PTHR33175:SF3">
    <property type="entry name" value="DNA-BINDING PROTEIN HU-BETA"/>
    <property type="match status" value="1"/>
</dbReference>
<dbReference type="Pfam" id="PF00216">
    <property type="entry name" value="Bac_DNA_binding"/>
    <property type="match status" value="1"/>
</dbReference>
<dbReference type="PRINTS" id="PR01727">
    <property type="entry name" value="DNABINDINGHU"/>
</dbReference>
<dbReference type="SMART" id="SM00411">
    <property type="entry name" value="BHL"/>
    <property type="match status" value="1"/>
</dbReference>
<dbReference type="SUPFAM" id="SSF47729">
    <property type="entry name" value="IHF-like DNA-binding proteins"/>
    <property type="match status" value="1"/>
</dbReference>
<dbReference type="PROSITE" id="PS00045">
    <property type="entry name" value="HISTONE_LIKE"/>
    <property type="match status" value="1"/>
</dbReference>
<organism>
    <name type="scientific">Borrelia turicatae</name>
    <dbReference type="NCBI Taxonomy" id="142"/>
    <lineage>
        <taxon>Bacteria</taxon>
        <taxon>Pseudomonadati</taxon>
        <taxon>Spirochaetota</taxon>
        <taxon>Spirochaetia</taxon>
        <taxon>Spirochaetales</taxon>
        <taxon>Borreliaceae</taxon>
        <taxon>Borrelia</taxon>
    </lineage>
</organism>
<feature type="chain" id="PRO_0000104923" description="DNA-binding protein HBbu">
    <location>
        <begin position="1"/>
        <end position="108"/>
    </location>
</feature>
<sequence>MSFSRRAKVTKSDIVNQISLNIKNSNEKLEKKYIRLVVDAFFEELKNSLCLNNVIEFRSFGTFELRKRKGRQNARNPQTGEYVNVDDHHVAYFRPGKDLKERVWGIKG</sequence>
<reference key="1">
    <citation type="journal article" date="1997" name="Int. J. Syst. Bacteriol.">
        <title>A phylogenetic analysis of Borrelia burgdorferi sensu lato based on sequence information from the hbb gene, coding for a histone-like protein.</title>
        <authorList>
            <person name="Valsangiacomo C."/>
            <person name="Balmelli T."/>
            <person name="Piffaretti J.C."/>
        </authorList>
    </citation>
    <scope>NUCLEOTIDE SEQUENCE [GENOMIC DNA]</scope>
    <source>
        <strain>0M2007</strain>
    </source>
</reference>
<accession>Q45722</accession>
<evidence type="ECO:0000250" key="1"/>
<evidence type="ECO:0000305" key="2"/>
<proteinExistence type="inferred from homology"/>
<name>DBH_BORTU</name>